<name>NANA_ECOHS</name>
<organism>
    <name type="scientific">Escherichia coli O9:H4 (strain HS)</name>
    <dbReference type="NCBI Taxonomy" id="331112"/>
    <lineage>
        <taxon>Bacteria</taxon>
        <taxon>Pseudomonadati</taxon>
        <taxon>Pseudomonadota</taxon>
        <taxon>Gammaproteobacteria</taxon>
        <taxon>Enterobacterales</taxon>
        <taxon>Enterobacteriaceae</taxon>
        <taxon>Escherichia</taxon>
    </lineage>
</organism>
<reference key="1">
    <citation type="journal article" date="2008" name="J. Bacteriol.">
        <title>The pangenome structure of Escherichia coli: comparative genomic analysis of E. coli commensal and pathogenic isolates.</title>
        <authorList>
            <person name="Rasko D.A."/>
            <person name="Rosovitz M.J."/>
            <person name="Myers G.S.A."/>
            <person name="Mongodin E.F."/>
            <person name="Fricke W.F."/>
            <person name="Gajer P."/>
            <person name="Crabtree J."/>
            <person name="Sebaihia M."/>
            <person name="Thomson N.R."/>
            <person name="Chaudhuri R."/>
            <person name="Henderson I.R."/>
            <person name="Sperandio V."/>
            <person name="Ravel J."/>
        </authorList>
    </citation>
    <scope>NUCLEOTIDE SEQUENCE [LARGE SCALE GENOMIC DNA]</scope>
    <source>
        <strain>HS</strain>
    </source>
</reference>
<accession>A8A535</accession>
<comment type="function">
    <text evidence="1">Catalyzes the reversible aldol cleavage of N-acetylneuraminic acid (sialic acid; Neu5Ac) to form pyruvate and N-acetylmannosamine (ManNAc) via a Schiff base intermediate.</text>
</comment>
<comment type="catalytic activity">
    <reaction evidence="1">
        <text>aceneuramate = aldehydo-N-acetyl-D-mannosamine + pyruvate</text>
        <dbReference type="Rhea" id="RHEA:23296"/>
        <dbReference type="ChEBI" id="CHEBI:15361"/>
        <dbReference type="ChEBI" id="CHEBI:17122"/>
        <dbReference type="ChEBI" id="CHEBI:173083"/>
        <dbReference type="EC" id="4.1.3.3"/>
    </reaction>
</comment>
<comment type="pathway">
    <text evidence="1">Amino-sugar metabolism; N-acetylneuraminate degradation; D-fructose 6-phosphate from N-acetylneuraminate: step 1/5.</text>
</comment>
<comment type="subunit">
    <text evidence="1">Homotetramer.</text>
</comment>
<comment type="subcellular location">
    <subcellularLocation>
        <location evidence="1">Cytoplasm</location>
    </subcellularLocation>
</comment>
<comment type="similarity">
    <text evidence="1">Belongs to the DapA family. NanA subfamily.</text>
</comment>
<sequence>MATNLRGVMAALLTPFDQQQALDKASLRRLVQFNIQQGIDGLYVGGSTGEAFVQSLSEREQVLEIVAEEAKGKIKLIAHVGCVSTAESQQLAASAKRYGFDAVSAVTPFYYPFSFEEHCDHYRAIIDSADGLPMVVYNIPALSGVKLTLDQINTLVTLPGVGALKQTSGDLYQMEQIRREHPDLVLYNGYDEIFASGLLAGADGGIGSTYNIMGWRYQGIVKALKEGDIQTAQKLQTECNKVIDLLIKTGVFRGLKTVLHYMDVVSVPLCRKPFGPVDEKYLPELKALAQQLMQERG</sequence>
<protein>
    <recommendedName>
        <fullName evidence="1">N-acetylneuraminate lyase</fullName>
        <shortName evidence="1">NAL</shortName>
        <shortName evidence="1">Neu5Ac lyase</shortName>
        <ecNumber evidence="1">4.1.3.3</ecNumber>
    </recommendedName>
    <alternativeName>
        <fullName evidence="1">N-acetylneuraminate pyruvate-lyase</fullName>
    </alternativeName>
    <alternativeName>
        <fullName evidence="1">N-acetylneuraminic acid aldolase</fullName>
    </alternativeName>
    <alternativeName>
        <fullName evidence="1">Sialate lyase</fullName>
    </alternativeName>
    <alternativeName>
        <fullName evidence="1">Sialic acid aldolase</fullName>
    </alternativeName>
    <alternativeName>
        <fullName evidence="1">Sialic acid lyase</fullName>
    </alternativeName>
</protein>
<feature type="chain" id="PRO_1000066924" description="N-acetylneuraminate lyase">
    <location>
        <begin position="1"/>
        <end position="297"/>
    </location>
</feature>
<feature type="active site" description="Proton donor" evidence="1">
    <location>
        <position position="137"/>
    </location>
</feature>
<feature type="active site" description="Schiff-base intermediate with substrate" evidence="1">
    <location>
        <position position="165"/>
    </location>
</feature>
<feature type="binding site" evidence="1">
    <location>
        <position position="47"/>
    </location>
    <ligand>
        <name>aceneuramate</name>
        <dbReference type="ChEBI" id="CHEBI:173083"/>
    </ligand>
</feature>
<feature type="binding site" evidence="1">
    <location>
        <position position="48"/>
    </location>
    <ligand>
        <name>aceneuramate</name>
        <dbReference type="ChEBI" id="CHEBI:173083"/>
    </ligand>
</feature>
<feature type="binding site" evidence="1">
    <location>
        <position position="167"/>
    </location>
    <ligand>
        <name>aceneuramate</name>
        <dbReference type="ChEBI" id="CHEBI:173083"/>
    </ligand>
</feature>
<feature type="binding site" evidence="1">
    <location>
        <position position="189"/>
    </location>
    <ligand>
        <name>aceneuramate</name>
        <dbReference type="ChEBI" id="CHEBI:173083"/>
    </ligand>
</feature>
<feature type="binding site" evidence="1">
    <location>
        <position position="191"/>
    </location>
    <ligand>
        <name>aceneuramate</name>
        <dbReference type="ChEBI" id="CHEBI:173083"/>
    </ligand>
</feature>
<feature type="binding site" evidence="1">
    <location>
        <position position="192"/>
    </location>
    <ligand>
        <name>aceneuramate</name>
        <dbReference type="ChEBI" id="CHEBI:173083"/>
    </ligand>
</feature>
<feature type="binding site" evidence="1">
    <location>
        <position position="208"/>
    </location>
    <ligand>
        <name>aceneuramate</name>
        <dbReference type="ChEBI" id="CHEBI:173083"/>
    </ligand>
</feature>
<evidence type="ECO:0000255" key="1">
    <source>
        <dbReference type="HAMAP-Rule" id="MF_01237"/>
    </source>
</evidence>
<keyword id="KW-0119">Carbohydrate metabolism</keyword>
<keyword id="KW-0963">Cytoplasm</keyword>
<keyword id="KW-0456">Lyase</keyword>
<keyword id="KW-0704">Schiff base</keyword>
<proteinExistence type="inferred from homology"/>
<dbReference type="EC" id="4.1.3.3" evidence="1"/>
<dbReference type="EMBL" id="CP000802">
    <property type="protein sequence ID" value="ABV07639.1"/>
    <property type="molecule type" value="Genomic_DNA"/>
</dbReference>
<dbReference type="RefSeq" id="WP_000224714.1">
    <property type="nucleotide sequence ID" value="NC_009800.1"/>
</dbReference>
<dbReference type="SMR" id="A8A535"/>
<dbReference type="GeneID" id="93778761"/>
<dbReference type="KEGG" id="ecx:EcHS_A3413"/>
<dbReference type="HOGENOM" id="CLU_049343_6_0_6"/>
<dbReference type="UniPathway" id="UPA00629">
    <property type="reaction ID" value="UER00680"/>
</dbReference>
<dbReference type="GO" id="GO:0005829">
    <property type="term" value="C:cytosol"/>
    <property type="evidence" value="ECO:0007669"/>
    <property type="project" value="TreeGrafter"/>
</dbReference>
<dbReference type="GO" id="GO:0008747">
    <property type="term" value="F:N-acetylneuraminate lyase activity"/>
    <property type="evidence" value="ECO:0007669"/>
    <property type="project" value="UniProtKB-UniRule"/>
</dbReference>
<dbReference type="GO" id="GO:0005975">
    <property type="term" value="P:carbohydrate metabolic process"/>
    <property type="evidence" value="ECO:0007669"/>
    <property type="project" value="UniProtKB-UniRule"/>
</dbReference>
<dbReference type="GO" id="GO:0019262">
    <property type="term" value="P:N-acetylneuraminate catabolic process"/>
    <property type="evidence" value="ECO:0007669"/>
    <property type="project" value="UniProtKB-UniRule"/>
</dbReference>
<dbReference type="CDD" id="cd00954">
    <property type="entry name" value="NAL"/>
    <property type="match status" value="1"/>
</dbReference>
<dbReference type="FunFam" id="3.20.20.70:FF:000039">
    <property type="entry name" value="N-acetylneuraminate lyase"/>
    <property type="match status" value="1"/>
</dbReference>
<dbReference type="Gene3D" id="3.20.20.70">
    <property type="entry name" value="Aldolase class I"/>
    <property type="match status" value="1"/>
</dbReference>
<dbReference type="HAMAP" id="MF_01237">
    <property type="entry name" value="N_acetylneuram_lyase"/>
    <property type="match status" value="1"/>
</dbReference>
<dbReference type="InterPro" id="IPR013785">
    <property type="entry name" value="Aldolase_TIM"/>
</dbReference>
<dbReference type="InterPro" id="IPR002220">
    <property type="entry name" value="DapA-like"/>
</dbReference>
<dbReference type="InterPro" id="IPR005264">
    <property type="entry name" value="NanA"/>
</dbReference>
<dbReference type="InterPro" id="IPR020625">
    <property type="entry name" value="Schiff_base-form_aldolases_AS"/>
</dbReference>
<dbReference type="InterPro" id="IPR020624">
    <property type="entry name" value="Schiff_base-form_aldolases_CS"/>
</dbReference>
<dbReference type="NCBIfam" id="TIGR00683">
    <property type="entry name" value="nanA"/>
    <property type="match status" value="1"/>
</dbReference>
<dbReference type="NCBIfam" id="NF003164">
    <property type="entry name" value="PRK04147.1"/>
    <property type="match status" value="1"/>
</dbReference>
<dbReference type="PANTHER" id="PTHR42849">
    <property type="entry name" value="N-ACETYLNEURAMINATE LYASE"/>
    <property type="match status" value="1"/>
</dbReference>
<dbReference type="PANTHER" id="PTHR42849:SF1">
    <property type="entry name" value="N-ACETYLNEURAMINATE LYASE"/>
    <property type="match status" value="1"/>
</dbReference>
<dbReference type="Pfam" id="PF00701">
    <property type="entry name" value="DHDPS"/>
    <property type="match status" value="1"/>
</dbReference>
<dbReference type="PIRSF" id="PIRSF001365">
    <property type="entry name" value="DHDPS"/>
    <property type="match status" value="1"/>
</dbReference>
<dbReference type="PRINTS" id="PR00146">
    <property type="entry name" value="DHPICSNTHASE"/>
</dbReference>
<dbReference type="SMART" id="SM01130">
    <property type="entry name" value="DHDPS"/>
    <property type="match status" value="1"/>
</dbReference>
<dbReference type="SUPFAM" id="SSF51569">
    <property type="entry name" value="Aldolase"/>
    <property type="match status" value="1"/>
</dbReference>
<dbReference type="PROSITE" id="PS00665">
    <property type="entry name" value="DHDPS_1"/>
    <property type="match status" value="1"/>
</dbReference>
<dbReference type="PROSITE" id="PS00666">
    <property type="entry name" value="DHDPS_2"/>
    <property type="match status" value="1"/>
</dbReference>
<gene>
    <name evidence="1" type="primary">nanA</name>
    <name type="ordered locus">EcHS_A3413</name>
</gene>